<name>ADHR_DROYA</name>
<proteinExistence type="inferred from homology"/>
<keyword id="KW-0560">Oxidoreductase</keyword>
<comment type="similarity">
    <text evidence="2">Belongs to the short-chain dehydrogenases/reductases (SDR) family.</text>
</comment>
<evidence type="ECO:0000250" key="1"/>
<evidence type="ECO:0000305" key="2"/>
<sequence>MFDLTGKHVCYVADCGGIALETSXVLMTKNIA</sequence>
<reference key="1">
    <citation type="submission" date="1990-07" db="EMBL/GenBank/DDBJ databases">
        <authorList>
            <person name="Ashburner M."/>
        </authorList>
    </citation>
    <scope>NUCLEOTIDE SEQUENCE [GENOMIC DNA]</scope>
</reference>
<organism>
    <name type="scientific">Drosophila yakuba</name>
    <name type="common">Fruit fly</name>
    <dbReference type="NCBI Taxonomy" id="7245"/>
    <lineage>
        <taxon>Eukaryota</taxon>
        <taxon>Metazoa</taxon>
        <taxon>Ecdysozoa</taxon>
        <taxon>Arthropoda</taxon>
        <taxon>Hexapoda</taxon>
        <taxon>Insecta</taxon>
        <taxon>Pterygota</taxon>
        <taxon>Neoptera</taxon>
        <taxon>Endopterygota</taxon>
        <taxon>Diptera</taxon>
        <taxon>Brachycera</taxon>
        <taxon>Muscomorpha</taxon>
        <taxon>Ephydroidea</taxon>
        <taxon>Drosophilidae</taxon>
        <taxon>Drosophila</taxon>
        <taxon>Sophophora</taxon>
    </lineage>
</organism>
<accession>P28487</accession>
<dbReference type="EMBL" id="X54120">
    <property type="protein sequence ID" value="CAA38064.1"/>
    <property type="molecule type" value="Genomic_DNA"/>
</dbReference>
<dbReference type="PIR" id="S20719">
    <property type="entry name" value="S20719"/>
</dbReference>
<dbReference type="eggNOG" id="KOG4169">
    <property type="taxonomic scope" value="Eukaryota"/>
</dbReference>
<dbReference type="GO" id="GO:0016491">
    <property type="term" value="F:oxidoreductase activity"/>
    <property type="evidence" value="ECO:0007669"/>
    <property type="project" value="UniProtKB-KW"/>
</dbReference>
<protein>
    <recommendedName>
        <fullName>Alcohol dehydrogenase-related 31 kDa protein</fullName>
    </recommendedName>
</protein>
<feature type="chain" id="PRO_0000054514" description="Alcohol dehydrogenase-related 31 kDa protein">
    <location>
        <begin position="1"/>
        <end position="32" status="greater than"/>
    </location>
</feature>
<feature type="binding site" evidence="1">
    <location>
        <begin position="11"/>
        <end position="32" status="greater than"/>
    </location>
    <ligand>
        <name>NAD(+)</name>
        <dbReference type="ChEBI" id="CHEBI:57540"/>
    </ligand>
</feature>
<feature type="non-terminal residue">
    <location>
        <position position="32"/>
    </location>
</feature>
<gene>
    <name type="primary">Adhr</name>
    <name type="synonym">Adh-dup</name>
</gene>